<dbReference type="EMBL" id="CP000057">
    <property type="protein sequence ID" value="AAX87857.1"/>
    <property type="molecule type" value="Genomic_DNA"/>
</dbReference>
<dbReference type="RefSeq" id="WP_005670099.1">
    <property type="nucleotide sequence ID" value="NC_007146.2"/>
</dbReference>
<dbReference type="SMR" id="Q4QM90"/>
<dbReference type="GeneID" id="93219851"/>
<dbReference type="KEGG" id="hit:NTHI0974"/>
<dbReference type="HOGENOM" id="CLU_054493_0_0_6"/>
<dbReference type="Proteomes" id="UP000002525">
    <property type="component" value="Chromosome"/>
</dbReference>
<dbReference type="GO" id="GO:0005737">
    <property type="term" value="C:cytoplasm"/>
    <property type="evidence" value="ECO:0007669"/>
    <property type="project" value="UniProtKB-SubCell"/>
</dbReference>
<dbReference type="GO" id="GO:0044183">
    <property type="term" value="F:protein folding chaperone"/>
    <property type="evidence" value="ECO:0007669"/>
    <property type="project" value="TreeGrafter"/>
</dbReference>
<dbReference type="GO" id="GO:0051082">
    <property type="term" value="F:unfolded protein binding"/>
    <property type="evidence" value="ECO:0007669"/>
    <property type="project" value="UniProtKB-UniRule"/>
</dbReference>
<dbReference type="GO" id="GO:0042026">
    <property type="term" value="P:protein refolding"/>
    <property type="evidence" value="ECO:0007669"/>
    <property type="project" value="TreeGrafter"/>
</dbReference>
<dbReference type="CDD" id="cd00498">
    <property type="entry name" value="Hsp33"/>
    <property type="match status" value="1"/>
</dbReference>
<dbReference type="Gene3D" id="1.10.287.480">
    <property type="entry name" value="helix hairpin bin"/>
    <property type="match status" value="1"/>
</dbReference>
<dbReference type="Gene3D" id="3.55.30.10">
    <property type="entry name" value="Hsp33 domain"/>
    <property type="match status" value="1"/>
</dbReference>
<dbReference type="Gene3D" id="3.90.1280.10">
    <property type="entry name" value="HSP33 redox switch-like"/>
    <property type="match status" value="1"/>
</dbReference>
<dbReference type="HAMAP" id="MF_00117">
    <property type="entry name" value="HslO"/>
    <property type="match status" value="1"/>
</dbReference>
<dbReference type="InterPro" id="IPR000397">
    <property type="entry name" value="Heat_shock_Hsp33"/>
</dbReference>
<dbReference type="InterPro" id="IPR016154">
    <property type="entry name" value="Heat_shock_Hsp33_C"/>
</dbReference>
<dbReference type="InterPro" id="IPR016153">
    <property type="entry name" value="Heat_shock_Hsp33_N"/>
</dbReference>
<dbReference type="InterPro" id="IPR023212">
    <property type="entry name" value="Hsp33_helix_hairpin_bin_dom_sf"/>
</dbReference>
<dbReference type="NCBIfam" id="NF001033">
    <property type="entry name" value="PRK00114.1"/>
    <property type="match status" value="1"/>
</dbReference>
<dbReference type="PANTHER" id="PTHR30111">
    <property type="entry name" value="33 KDA CHAPERONIN"/>
    <property type="match status" value="1"/>
</dbReference>
<dbReference type="PANTHER" id="PTHR30111:SF1">
    <property type="entry name" value="33 KDA CHAPERONIN"/>
    <property type="match status" value="1"/>
</dbReference>
<dbReference type="Pfam" id="PF01430">
    <property type="entry name" value="HSP33"/>
    <property type="match status" value="1"/>
</dbReference>
<dbReference type="PIRSF" id="PIRSF005261">
    <property type="entry name" value="Heat_shock_Hsp33"/>
    <property type="match status" value="1"/>
</dbReference>
<dbReference type="SUPFAM" id="SSF64397">
    <property type="entry name" value="Hsp33 domain"/>
    <property type="match status" value="1"/>
</dbReference>
<dbReference type="SUPFAM" id="SSF118352">
    <property type="entry name" value="HSP33 redox switch-like"/>
    <property type="match status" value="1"/>
</dbReference>
<reference key="1">
    <citation type="journal article" date="2005" name="J. Bacteriol.">
        <title>Genomic sequence of an otitis media isolate of nontypeable Haemophilus influenzae: comparative study with H. influenzae serotype d, strain KW20.</title>
        <authorList>
            <person name="Harrison A."/>
            <person name="Dyer D.W."/>
            <person name="Gillaspy A."/>
            <person name="Ray W.C."/>
            <person name="Mungur R."/>
            <person name="Carson M.B."/>
            <person name="Zhong H."/>
            <person name="Gipson J."/>
            <person name="Gipson M."/>
            <person name="Johnson L.S."/>
            <person name="Lewis L."/>
            <person name="Bakaletz L.O."/>
            <person name="Munson R.S. Jr."/>
        </authorList>
    </citation>
    <scope>NUCLEOTIDE SEQUENCE [LARGE SCALE GENOMIC DNA]</scope>
    <source>
        <strain>86-028NP</strain>
    </source>
</reference>
<gene>
    <name evidence="1" type="primary">hslO</name>
    <name type="ordered locus">NTHI0974</name>
</gene>
<proteinExistence type="inferred from homology"/>
<feature type="chain" id="PRO_0000238070" description="33 kDa chaperonin">
    <location>
        <begin position="1"/>
        <end position="293"/>
    </location>
</feature>
<feature type="disulfide bond" description="Redox-active" evidence="1">
    <location>
        <begin position="237"/>
        <end position="239"/>
    </location>
</feature>
<feature type="disulfide bond" description="Redox-active" evidence="1">
    <location>
        <begin position="271"/>
        <end position="274"/>
    </location>
</feature>
<comment type="function">
    <text evidence="1">Redox regulated molecular chaperone. Protects both thermally unfolding and oxidatively damaged proteins from irreversible aggregation. Plays an important role in the bacterial defense system toward oxidative stress.</text>
</comment>
<comment type="subcellular location">
    <subcellularLocation>
        <location evidence="1">Cytoplasm</location>
    </subcellularLocation>
</comment>
<comment type="PTM">
    <text evidence="1">Under oxidizing conditions two disulfide bonds are formed involving the reactive cysteines. Under reducing conditions zinc is bound to the reactive cysteines and the protein is inactive.</text>
</comment>
<comment type="similarity">
    <text evidence="1">Belongs to the HSP33 family.</text>
</comment>
<evidence type="ECO:0000255" key="1">
    <source>
        <dbReference type="HAMAP-Rule" id="MF_00117"/>
    </source>
</evidence>
<sequence length="293" mass="33033">MTNQQDYTQDNDKLYRYLFQHRAVRGEWVRLNKTFTDTLNTHQYPKAVQDLLGEMMVATNLLTATLKFAGNITVQIQGDGPLRLALVNGNDQQQIRALARVDGNITENMSLHNMIGKGVLVITIAPKEGERYQGVISLDKPTITECLEDYFVRSEQLQTQLIIRTGEYEGKPVAAGMLLQIMPDGSGTPEDFEHLTTLAATVKDEELFGLPAEELLYRLYHEETVNLYPAQDVQFFCGCSAERSSSALLLISDEEIDEILAEHKGSIDMQCECCGTHYFFNKEAIEKLKSTRV</sequence>
<accession>Q4QM90</accession>
<name>HSLO_HAEI8</name>
<organism>
    <name type="scientific">Haemophilus influenzae (strain 86-028NP)</name>
    <dbReference type="NCBI Taxonomy" id="281310"/>
    <lineage>
        <taxon>Bacteria</taxon>
        <taxon>Pseudomonadati</taxon>
        <taxon>Pseudomonadota</taxon>
        <taxon>Gammaproteobacteria</taxon>
        <taxon>Pasteurellales</taxon>
        <taxon>Pasteurellaceae</taxon>
        <taxon>Haemophilus</taxon>
    </lineage>
</organism>
<keyword id="KW-0143">Chaperone</keyword>
<keyword id="KW-0963">Cytoplasm</keyword>
<keyword id="KW-1015">Disulfide bond</keyword>
<keyword id="KW-0676">Redox-active center</keyword>
<keyword id="KW-0862">Zinc</keyword>
<protein>
    <recommendedName>
        <fullName evidence="1">33 kDa chaperonin</fullName>
    </recommendedName>
    <alternativeName>
        <fullName evidence="1">Heat shock protein 33 homolog</fullName>
        <shortName evidence="1">HSP33</shortName>
    </alternativeName>
</protein>